<proteinExistence type="inferred from homology"/>
<comment type="function">
    <text evidence="2">Produces ATP from ADP in the presence of a proton gradient across the membrane. The alpha chain is a regulatory subunit.</text>
</comment>
<comment type="catalytic activity">
    <reaction evidence="2">
        <text>ATP + H2O + 4 H(+)(in) = ADP + phosphate + 5 H(+)(out)</text>
        <dbReference type="Rhea" id="RHEA:57720"/>
        <dbReference type="ChEBI" id="CHEBI:15377"/>
        <dbReference type="ChEBI" id="CHEBI:15378"/>
        <dbReference type="ChEBI" id="CHEBI:30616"/>
        <dbReference type="ChEBI" id="CHEBI:43474"/>
        <dbReference type="ChEBI" id="CHEBI:456216"/>
        <dbReference type="EC" id="7.1.2.2"/>
    </reaction>
</comment>
<comment type="subunit">
    <text evidence="1">F-type ATPases have 2 components, CF(1) - the catalytic core - and CF(0) - the membrane proton channel. CF(1) has five subunits: alpha(3), beta(3), gamma(1), delta(1), epsilon(1). CF(0) has four main subunits: a(1), b(1), b'(1) and c(9-12) (By similarity).</text>
</comment>
<comment type="subcellular location">
    <subcellularLocation>
        <location evidence="2">Cellular thylakoid membrane</location>
        <topology evidence="2">Peripheral membrane protein</topology>
    </subcellularLocation>
</comment>
<comment type="similarity">
    <text evidence="2">Belongs to the ATPase alpha/beta chains family.</text>
</comment>
<comment type="sequence caution" evidence="3">
    <conflict type="erroneous initiation">
        <sequence resource="EMBL-CDS" id="ABA22226"/>
    </conflict>
</comment>
<dbReference type="EC" id="7.1.2.2" evidence="2"/>
<dbReference type="EMBL" id="CP000117">
    <property type="protein sequence ID" value="ABA22226.1"/>
    <property type="status" value="ALT_INIT"/>
    <property type="molecule type" value="Genomic_DNA"/>
</dbReference>
<dbReference type="SMR" id="Q3M9W0"/>
<dbReference type="STRING" id="240292.Ava_2611"/>
<dbReference type="KEGG" id="ava:Ava_2611"/>
<dbReference type="eggNOG" id="COG0056">
    <property type="taxonomic scope" value="Bacteria"/>
</dbReference>
<dbReference type="HOGENOM" id="CLU_010091_2_1_3"/>
<dbReference type="Proteomes" id="UP000002533">
    <property type="component" value="Chromosome"/>
</dbReference>
<dbReference type="GO" id="GO:0031676">
    <property type="term" value="C:plasma membrane-derived thylakoid membrane"/>
    <property type="evidence" value="ECO:0007669"/>
    <property type="project" value="UniProtKB-SubCell"/>
</dbReference>
<dbReference type="GO" id="GO:0045259">
    <property type="term" value="C:proton-transporting ATP synthase complex"/>
    <property type="evidence" value="ECO:0007669"/>
    <property type="project" value="UniProtKB-KW"/>
</dbReference>
<dbReference type="GO" id="GO:0043531">
    <property type="term" value="F:ADP binding"/>
    <property type="evidence" value="ECO:0007669"/>
    <property type="project" value="TreeGrafter"/>
</dbReference>
<dbReference type="GO" id="GO:0005524">
    <property type="term" value="F:ATP binding"/>
    <property type="evidence" value="ECO:0007669"/>
    <property type="project" value="UniProtKB-UniRule"/>
</dbReference>
<dbReference type="GO" id="GO:0046933">
    <property type="term" value="F:proton-transporting ATP synthase activity, rotational mechanism"/>
    <property type="evidence" value="ECO:0007669"/>
    <property type="project" value="UniProtKB-UniRule"/>
</dbReference>
<dbReference type="CDD" id="cd18113">
    <property type="entry name" value="ATP-synt_F1_alpha_C"/>
    <property type="match status" value="1"/>
</dbReference>
<dbReference type="CDD" id="cd18116">
    <property type="entry name" value="ATP-synt_F1_alpha_N"/>
    <property type="match status" value="1"/>
</dbReference>
<dbReference type="CDD" id="cd01132">
    <property type="entry name" value="F1-ATPase_alpha_CD"/>
    <property type="match status" value="1"/>
</dbReference>
<dbReference type="FunFam" id="1.20.150.20:FF:000001">
    <property type="entry name" value="ATP synthase subunit alpha"/>
    <property type="match status" value="1"/>
</dbReference>
<dbReference type="FunFam" id="2.40.30.20:FF:000001">
    <property type="entry name" value="ATP synthase subunit alpha"/>
    <property type="match status" value="1"/>
</dbReference>
<dbReference type="FunFam" id="3.40.50.300:FF:000002">
    <property type="entry name" value="ATP synthase subunit alpha"/>
    <property type="match status" value="1"/>
</dbReference>
<dbReference type="Gene3D" id="2.40.30.20">
    <property type="match status" value="1"/>
</dbReference>
<dbReference type="Gene3D" id="1.20.150.20">
    <property type="entry name" value="ATP synthase alpha/beta chain, C-terminal domain"/>
    <property type="match status" value="1"/>
</dbReference>
<dbReference type="Gene3D" id="3.40.50.300">
    <property type="entry name" value="P-loop containing nucleotide triphosphate hydrolases"/>
    <property type="match status" value="1"/>
</dbReference>
<dbReference type="HAMAP" id="MF_01346">
    <property type="entry name" value="ATP_synth_alpha_bact"/>
    <property type="match status" value="1"/>
</dbReference>
<dbReference type="InterPro" id="IPR023366">
    <property type="entry name" value="ATP_synth_asu-like_sf"/>
</dbReference>
<dbReference type="InterPro" id="IPR000793">
    <property type="entry name" value="ATP_synth_asu_C"/>
</dbReference>
<dbReference type="InterPro" id="IPR038376">
    <property type="entry name" value="ATP_synth_asu_C_sf"/>
</dbReference>
<dbReference type="InterPro" id="IPR033732">
    <property type="entry name" value="ATP_synth_F1_a_nt-bd_dom"/>
</dbReference>
<dbReference type="InterPro" id="IPR005294">
    <property type="entry name" value="ATP_synth_F1_asu"/>
</dbReference>
<dbReference type="InterPro" id="IPR020003">
    <property type="entry name" value="ATPase_a/bsu_AS"/>
</dbReference>
<dbReference type="InterPro" id="IPR004100">
    <property type="entry name" value="ATPase_F1/V1/A1_a/bsu_N"/>
</dbReference>
<dbReference type="InterPro" id="IPR036121">
    <property type="entry name" value="ATPase_F1/V1/A1_a/bsu_N_sf"/>
</dbReference>
<dbReference type="InterPro" id="IPR000194">
    <property type="entry name" value="ATPase_F1/V1/A1_a/bsu_nucl-bd"/>
</dbReference>
<dbReference type="InterPro" id="IPR027417">
    <property type="entry name" value="P-loop_NTPase"/>
</dbReference>
<dbReference type="NCBIfam" id="TIGR00962">
    <property type="entry name" value="atpA"/>
    <property type="match status" value="1"/>
</dbReference>
<dbReference type="NCBIfam" id="NF009884">
    <property type="entry name" value="PRK13343.1"/>
    <property type="match status" value="1"/>
</dbReference>
<dbReference type="PANTHER" id="PTHR48082">
    <property type="entry name" value="ATP SYNTHASE SUBUNIT ALPHA, MITOCHONDRIAL"/>
    <property type="match status" value="1"/>
</dbReference>
<dbReference type="PANTHER" id="PTHR48082:SF2">
    <property type="entry name" value="ATP SYNTHASE SUBUNIT ALPHA, MITOCHONDRIAL"/>
    <property type="match status" value="1"/>
</dbReference>
<dbReference type="Pfam" id="PF00006">
    <property type="entry name" value="ATP-synt_ab"/>
    <property type="match status" value="1"/>
</dbReference>
<dbReference type="Pfam" id="PF00306">
    <property type="entry name" value="ATP-synt_ab_C"/>
    <property type="match status" value="1"/>
</dbReference>
<dbReference type="Pfam" id="PF02874">
    <property type="entry name" value="ATP-synt_ab_N"/>
    <property type="match status" value="1"/>
</dbReference>
<dbReference type="PIRSF" id="PIRSF039088">
    <property type="entry name" value="F_ATPase_subunit_alpha"/>
    <property type="match status" value="1"/>
</dbReference>
<dbReference type="SUPFAM" id="SSF47917">
    <property type="entry name" value="C-terminal domain of alpha and beta subunits of F1 ATP synthase"/>
    <property type="match status" value="1"/>
</dbReference>
<dbReference type="SUPFAM" id="SSF50615">
    <property type="entry name" value="N-terminal domain of alpha and beta subunits of F1 ATP synthase"/>
    <property type="match status" value="1"/>
</dbReference>
<dbReference type="SUPFAM" id="SSF52540">
    <property type="entry name" value="P-loop containing nucleoside triphosphate hydrolases"/>
    <property type="match status" value="1"/>
</dbReference>
<dbReference type="PROSITE" id="PS00152">
    <property type="entry name" value="ATPASE_ALPHA_BETA"/>
    <property type="match status" value="1"/>
</dbReference>
<name>ATPA_TRIV2</name>
<organism>
    <name type="scientific">Trichormus variabilis (strain ATCC 29413 / PCC 7937)</name>
    <name type="common">Anabaena variabilis</name>
    <dbReference type="NCBI Taxonomy" id="240292"/>
    <lineage>
        <taxon>Bacteria</taxon>
        <taxon>Bacillati</taxon>
        <taxon>Cyanobacteriota</taxon>
        <taxon>Cyanophyceae</taxon>
        <taxon>Nostocales</taxon>
        <taxon>Nostocaceae</taxon>
        <taxon>Trichormus</taxon>
    </lineage>
</organism>
<sequence>MSISIRPDEISSIIQQQIEQYDQEVKVANVGTVLQVGDGIARIYGLEKAMAGELLEFEDGTVGIAQNLEEDNVGAVLMGEGREIQEGSTVTATGRIAQIGVGEALIGRVVDALGRAIDGKGDIKASESRLIESPAPGIIARRSVHEPMQTGITAIDSMIPIGRGQRELIIGDRQTGKTAIAIDTIINQKGEDVVCVYVAIGQKASTVANVVQTLQEKGAMDYTVVVAAGASEPATLQFLAPYTGATIAEYFMYKGKATLVIYDDLSKQAQAYRQMSLLLRRPPGREAYPGDVFYIHSRLLERAAKLSDELGKGSMTALPIIETQAGDVSAYIPTNVISITDGQIFLSSDLFNAGIRPAVNPGISVSRVGSAAQTKAMKKVAGKIKLELAQFDDLQAFAQFASDLDKATQDQLARGQRLRELLKQSQNQPLSVAEQVAILYAGINGYLDDIPVDKVTTFTKGLRDYLKSGVNPYFQDVQSKKTLGDDEEKALKAALDDYKKTFKATA</sequence>
<feature type="chain" id="PRO_0000238187" description="ATP synthase subunit alpha">
    <location>
        <begin position="1"/>
        <end position="506"/>
    </location>
</feature>
<feature type="binding site" evidence="2">
    <location>
        <begin position="171"/>
        <end position="178"/>
    </location>
    <ligand>
        <name>ATP</name>
        <dbReference type="ChEBI" id="CHEBI:30616"/>
    </ligand>
</feature>
<feature type="site" description="Required for activity" evidence="2">
    <location>
        <position position="364"/>
    </location>
</feature>
<evidence type="ECO:0000250" key="1"/>
<evidence type="ECO:0000255" key="2">
    <source>
        <dbReference type="HAMAP-Rule" id="MF_01346"/>
    </source>
</evidence>
<evidence type="ECO:0000305" key="3"/>
<accession>Q3M9W0</accession>
<gene>
    <name evidence="2" type="primary">atpA</name>
    <name type="ordered locus">Ava_2611</name>
</gene>
<reference key="1">
    <citation type="journal article" date="2014" name="Stand. Genomic Sci.">
        <title>Complete genome sequence of Anabaena variabilis ATCC 29413.</title>
        <authorList>
            <person name="Thiel T."/>
            <person name="Pratte B.S."/>
            <person name="Zhong J."/>
            <person name="Goodwin L."/>
            <person name="Copeland A."/>
            <person name="Lucas S."/>
            <person name="Han C."/>
            <person name="Pitluck S."/>
            <person name="Land M.L."/>
            <person name="Kyrpides N.C."/>
            <person name="Woyke T."/>
        </authorList>
    </citation>
    <scope>NUCLEOTIDE SEQUENCE [LARGE SCALE GENOMIC DNA]</scope>
    <source>
        <strain>ATCC 29413 / PCC 7937</strain>
    </source>
</reference>
<keyword id="KW-0066">ATP synthesis</keyword>
<keyword id="KW-0067">ATP-binding</keyword>
<keyword id="KW-0139">CF(1)</keyword>
<keyword id="KW-0375">Hydrogen ion transport</keyword>
<keyword id="KW-0406">Ion transport</keyword>
<keyword id="KW-0472">Membrane</keyword>
<keyword id="KW-0547">Nucleotide-binding</keyword>
<keyword id="KW-0793">Thylakoid</keyword>
<keyword id="KW-1278">Translocase</keyword>
<keyword id="KW-0813">Transport</keyword>
<protein>
    <recommendedName>
        <fullName evidence="2">ATP synthase subunit alpha</fullName>
        <ecNumber evidence="2">7.1.2.2</ecNumber>
    </recommendedName>
    <alternativeName>
        <fullName evidence="2">ATP synthase F1 sector subunit alpha</fullName>
    </alternativeName>
    <alternativeName>
        <fullName evidence="2">F-ATPase subunit alpha</fullName>
    </alternativeName>
</protein>